<comment type="function">
    <text evidence="1">Catalyzes the transfer of endogenously produced octanoic acid from octanoyl-acyl-carrier-protein onto the lipoyl domain of GcvH, an intermediate carrier during protein lipoylation.</text>
</comment>
<comment type="catalytic activity">
    <reaction evidence="1">
        <text>octanoyl-[ACP] + L-lysyl-[protein] = N(6)-octanoyl-L-lysyl-[protein] + holo-[ACP] + H(+)</text>
        <dbReference type="Rhea" id="RHEA:17665"/>
        <dbReference type="Rhea" id="RHEA-COMP:9636"/>
        <dbReference type="Rhea" id="RHEA-COMP:9685"/>
        <dbReference type="Rhea" id="RHEA-COMP:9752"/>
        <dbReference type="Rhea" id="RHEA-COMP:9928"/>
        <dbReference type="ChEBI" id="CHEBI:15378"/>
        <dbReference type="ChEBI" id="CHEBI:29969"/>
        <dbReference type="ChEBI" id="CHEBI:64479"/>
        <dbReference type="ChEBI" id="CHEBI:78463"/>
        <dbReference type="ChEBI" id="CHEBI:78809"/>
        <dbReference type="EC" id="2.3.1.181"/>
    </reaction>
</comment>
<comment type="pathway">
    <text evidence="1">Protein modification; protein lipoylation via endogenous pathway; protein N(6)-(lipoyl)lysine from octanoyl-[acyl-carrier-protein].</text>
</comment>
<comment type="subunit">
    <text evidence="1">Monomer.</text>
</comment>
<comment type="miscellaneous">
    <text evidence="1">In the reaction, the free carboxyl group of octanoic acid is attached via an amide linkage to the epsilon-amino group of a specific lysine residue of lipoyl domains of lipoate-dependent enzymes. The reaction proceeds via an octanoyl-thioester enzyme intermediate.</text>
</comment>
<comment type="similarity">
    <text evidence="1">Belongs to the octanoyltransferase LipM family.</text>
</comment>
<accession>Q9K938</accession>
<sequence length="276" mass="31865">METWRFIDSGDRDPAYNMALDEALLNWHSEGLIPPTIRFYGWNPPTLSIGYFQKVQKEINMEMVEKHQLGFVRRPTGGRGVLHDKELTYSVIVTEEHPDMPASVTEAYRIISQGILEGFRDLGLDAYFAVPKTEEEKNALKNPRSAVCFDAPSWYELVVEGRKVAGSAQTRQKGVILQHGSIVLDIDEDKLFDLFNYPSERVRERMQRNFKNKAVPINELRDVPLSMEEVKKAFKDGFEKGLSIKLEPYTLTDAEEAEVKQIAKERYETDEWNFRK</sequence>
<evidence type="ECO:0000255" key="1">
    <source>
        <dbReference type="HAMAP-Rule" id="MF_02118"/>
    </source>
</evidence>
<evidence type="ECO:0000255" key="2">
    <source>
        <dbReference type="PROSITE-ProRule" id="PRU01067"/>
    </source>
</evidence>
<proteinExistence type="inferred from homology"/>
<organism>
    <name type="scientific">Halalkalibacterium halodurans (strain ATCC BAA-125 / DSM 18197 / FERM 7344 / JCM 9153 / C-125)</name>
    <name type="common">Bacillus halodurans</name>
    <dbReference type="NCBI Taxonomy" id="272558"/>
    <lineage>
        <taxon>Bacteria</taxon>
        <taxon>Bacillati</taxon>
        <taxon>Bacillota</taxon>
        <taxon>Bacilli</taxon>
        <taxon>Bacillales</taxon>
        <taxon>Bacillaceae</taxon>
        <taxon>Halalkalibacterium (ex Joshi et al. 2022)</taxon>
    </lineage>
</organism>
<feature type="chain" id="PRO_0000410851" description="Octanoyltransferase LipM">
    <location>
        <begin position="1"/>
        <end position="276"/>
    </location>
</feature>
<feature type="domain" description="BPL/LPL catalytic" evidence="2">
    <location>
        <begin position="31"/>
        <end position="246"/>
    </location>
</feature>
<feature type="active site" description="Acyl-thioester intermediate" evidence="1">
    <location>
        <position position="148"/>
    </location>
</feature>
<feature type="site" description="Lowers pKa of active site Cys" evidence="1">
    <location>
        <position position="163"/>
    </location>
</feature>
<gene>
    <name evidence="1" type="primary">lipM</name>
    <name type="ordered locus">BH2812</name>
</gene>
<reference key="1">
    <citation type="journal article" date="2000" name="Nucleic Acids Res.">
        <title>Complete genome sequence of the alkaliphilic bacterium Bacillus halodurans and genomic sequence comparison with Bacillus subtilis.</title>
        <authorList>
            <person name="Takami H."/>
            <person name="Nakasone K."/>
            <person name="Takaki Y."/>
            <person name="Maeno G."/>
            <person name="Sasaki R."/>
            <person name="Masui N."/>
            <person name="Fuji F."/>
            <person name="Hirama C."/>
            <person name="Nakamura Y."/>
            <person name="Ogasawara N."/>
            <person name="Kuhara S."/>
            <person name="Horikoshi K."/>
        </authorList>
    </citation>
    <scope>NUCLEOTIDE SEQUENCE [LARGE SCALE GENOMIC DNA]</scope>
    <source>
        <strain>ATCC BAA-125 / DSM 18197 / FERM 7344 / JCM 9153 / C-125</strain>
    </source>
</reference>
<dbReference type="EC" id="2.3.1.181" evidence="1"/>
<dbReference type="EMBL" id="BA000004">
    <property type="protein sequence ID" value="BAB06531.1"/>
    <property type="molecule type" value="Genomic_DNA"/>
</dbReference>
<dbReference type="PIR" id="D84001">
    <property type="entry name" value="D84001"/>
</dbReference>
<dbReference type="SMR" id="Q9K938"/>
<dbReference type="STRING" id="272558.gene:10728712"/>
<dbReference type="KEGG" id="bha:BH2812"/>
<dbReference type="eggNOG" id="COG0095">
    <property type="taxonomic scope" value="Bacteria"/>
</dbReference>
<dbReference type="HOGENOM" id="CLU_022986_5_0_9"/>
<dbReference type="Proteomes" id="UP000001258">
    <property type="component" value="Chromosome"/>
</dbReference>
<dbReference type="GO" id="GO:0033819">
    <property type="term" value="F:lipoyl(octanoyl) transferase activity"/>
    <property type="evidence" value="ECO:0007669"/>
    <property type="project" value="UniProtKB-UniRule"/>
</dbReference>
<dbReference type="GO" id="GO:0009107">
    <property type="term" value="P:lipoate biosynthetic process"/>
    <property type="evidence" value="ECO:0007669"/>
    <property type="project" value="UniProtKB-UniRule"/>
</dbReference>
<dbReference type="GO" id="GO:0036211">
    <property type="term" value="P:protein modification process"/>
    <property type="evidence" value="ECO:0007669"/>
    <property type="project" value="InterPro"/>
</dbReference>
<dbReference type="CDD" id="cd16443">
    <property type="entry name" value="LplA"/>
    <property type="match status" value="1"/>
</dbReference>
<dbReference type="Gene3D" id="3.30.930.10">
    <property type="entry name" value="Bira Bifunctional Protein, Domain 2"/>
    <property type="match status" value="1"/>
</dbReference>
<dbReference type="HAMAP" id="MF_02118">
    <property type="entry name" value="LipM"/>
    <property type="match status" value="1"/>
</dbReference>
<dbReference type="InterPro" id="IPR045864">
    <property type="entry name" value="aa-tRNA-synth_II/BPL/LPL"/>
</dbReference>
<dbReference type="InterPro" id="IPR004143">
    <property type="entry name" value="BPL_LPL_catalytic"/>
</dbReference>
<dbReference type="InterPro" id="IPR024898">
    <property type="entry name" value="LipM"/>
</dbReference>
<dbReference type="InterPro" id="IPR050664">
    <property type="entry name" value="Octanoyltrans_LipM/LipL"/>
</dbReference>
<dbReference type="PANTHER" id="PTHR43679:SF2">
    <property type="entry name" value="OCTANOYL-[GCVH]:PROTEIN N-OCTANOYLTRANSFERASE"/>
    <property type="match status" value="1"/>
</dbReference>
<dbReference type="PANTHER" id="PTHR43679">
    <property type="entry name" value="OCTANOYLTRANSFERASE LIPM-RELATED"/>
    <property type="match status" value="1"/>
</dbReference>
<dbReference type="Pfam" id="PF21948">
    <property type="entry name" value="LplA-B_cat"/>
    <property type="match status" value="1"/>
</dbReference>
<dbReference type="SUPFAM" id="SSF55681">
    <property type="entry name" value="Class II aaRS and biotin synthetases"/>
    <property type="match status" value="1"/>
</dbReference>
<dbReference type="PROSITE" id="PS51733">
    <property type="entry name" value="BPL_LPL_CATALYTIC"/>
    <property type="match status" value="1"/>
</dbReference>
<keyword id="KW-0012">Acyltransferase</keyword>
<keyword id="KW-1185">Reference proteome</keyword>
<keyword id="KW-0808">Transferase</keyword>
<protein>
    <recommendedName>
        <fullName evidence="1">Octanoyltransferase LipM</fullName>
        <ecNumber evidence="1">2.3.1.181</ecNumber>
    </recommendedName>
    <alternativeName>
        <fullName evidence="1">Octanoyl-[acyl-carrier-protein]:[GcvH] N-octanoyltransferase</fullName>
    </alternativeName>
</protein>
<name>LIPM_HALH5</name>